<accession>B9L273</accession>
<gene>
    <name evidence="1" type="primary">mraZ</name>
    <name type="ordered locus">trd_0055</name>
</gene>
<name>MRAZ_THERP</name>
<reference key="1">
    <citation type="journal article" date="2009" name="PLoS ONE">
        <title>Complete genome sequence of the aerobic CO-oxidizing thermophile Thermomicrobium roseum.</title>
        <authorList>
            <person name="Wu D."/>
            <person name="Raymond J."/>
            <person name="Wu M."/>
            <person name="Chatterji S."/>
            <person name="Ren Q."/>
            <person name="Graham J.E."/>
            <person name="Bryant D.A."/>
            <person name="Robb F."/>
            <person name="Colman A."/>
            <person name="Tallon L.J."/>
            <person name="Badger J.H."/>
            <person name="Madupu R."/>
            <person name="Ward N.L."/>
            <person name="Eisen J.A."/>
        </authorList>
    </citation>
    <scope>NUCLEOTIDE SEQUENCE [LARGE SCALE GENOMIC DNA]</scope>
    <source>
        <strain>ATCC 27502 / DSM 5159 / P-2</strain>
    </source>
</reference>
<protein>
    <recommendedName>
        <fullName>Transcriptional regulator MraZ</fullName>
    </recommendedName>
</protein>
<comment type="subunit">
    <text evidence="1">Forms oligomers.</text>
</comment>
<comment type="subcellular location">
    <subcellularLocation>
        <location evidence="1">Cytoplasm</location>
        <location evidence="1">Nucleoid</location>
    </subcellularLocation>
</comment>
<comment type="similarity">
    <text evidence="1">Belongs to the MraZ family.</text>
</comment>
<dbReference type="EMBL" id="CP001275">
    <property type="protein sequence ID" value="ACM04939.1"/>
    <property type="molecule type" value="Genomic_DNA"/>
</dbReference>
<dbReference type="RefSeq" id="WP_012641469.1">
    <property type="nucleotide sequence ID" value="NC_011959.1"/>
</dbReference>
<dbReference type="SMR" id="B9L273"/>
<dbReference type="STRING" id="309801.trd_0055"/>
<dbReference type="KEGG" id="tro:trd_0055"/>
<dbReference type="eggNOG" id="COG2001">
    <property type="taxonomic scope" value="Bacteria"/>
</dbReference>
<dbReference type="HOGENOM" id="CLU_107907_0_5_0"/>
<dbReference type="OrthoDB" id="9807753at2"/>
<dbReference type="Proteomes" id="UP000000447">
    <property type="component" value="Chromosome"/>
</dbReference>
<dbReference type="GO" id="GO:0005737">
    <property type="term" value="C:cytoplasm"/>
    <property type="evidence" value="ECO:0007669"/>
    <property type="project" value="UniProtKB-UniRule"/>
</dbReference>
<dbReference type="GO" id="GO:0009295">
    <property type="term" value="C:nucleoid"/>
    <property type="evidence" value="ECO:0007669"/>
    <property type="project" value="UniProtKB-SubCell"/>
</dbReference>
<dbReference type="GO" id="GO:0003700">
    <property type="term" value="F:DNA-binding transcription factor activity"/>
    <property type="evidence" value="ECO:0007669"/>
    <property type="project" value="UniProtKB-UniRule"/>
</dbReference>
<dbReference type="GO" id="GO:0000976">
    <property type="term" value="F:transcription cis-regulatory region binding"/>
    <property type="evidence" value="ECO:0007669"/>
    <property type="project" value="TreeGrafter"/>
</dbReference>
<dbReference type="GO" id="GO:2000143">
    <property type="term" value="P:negative regulation of DNA-templated transcription initiation"/>
    <property type="evidence" value="ECO:0007669"/>
    <property type="project" value="TreeGrafter"/>
</dbReference>
<dbReference type="CDD" id="cd16321">
    <property type="entry name" value="MraZ_C"/>
    <property type="match status" value="1"/>
</dbReference>
<dbReference type="CDD" id="cd16320">
    <property type="entry name" value="MraZ_N"/>
    <property type="match status" value="1"/>
</dbReference>
<dbReference type="Gene3D" id="3.40.1550.20">
    <property type="entry name" value="Transcriptional regulator MraZ domain"/>
    <property type="match status" value="1"/>
</dbReference>
<dbReference type="HAMAP" id="MF_01008">
    <property type="entry name" value="MraZ"/>
    <property type="match status" value="1"/>
</dbReference>
<dbReference type="InterPro" id="IPR003444">
    <property type="entry name" value="MraZ"/>
</dbReference>
<dbReference type="InterPro" id="IPR035644">
    <property type="entry name" value="MraZ_C"/>
</dbReference>
<dbReference type="InterPro" id="IPR020603">
    <property type="entry name" value="MraZ_dom"/>
</dbReference>
<dbReference type="InterPro" id="IPR035642">
    <property type="entry name" value="MraZ_N"/>
</dbReference>
<dbReference type="InterPro" id="IPR038619">
    <property type="entry name" value="MraZ_sf"/>
</dbReference>
<dbReference type="InterPro" id="IPR007159">
    <property type="entry name" value="SpoVT-AbrB_dom"/>
</dbReference>
<dbReference type="InterPro" id="IPR037914">
    <property type="entry name" value="SpoVT-AbrB_sf"/>
</dbReference>
<dbReference type="NCBIfam" id="TIGR00242">
    <property type="entry name" value="division/cell wall cluster transcriptional repressor MraZ"/>
    <property type="match status" value="1"/>
</dbReference>
<dbReference type="PANTHER" id="PTHR34701">
    <property type="entry name" value="TRANSCRIPTIONAL REGULATOR MRAZ"/>
    <property type="match status" value="1"/>
</dbReference>
<dbReference type="PANTHER" id="PTHR34701:SF1">
    <property type="entry name" value="TRANSCRIPTIONAL REGULATOR MRAZ"/>
    <property type="match status" value="1"/>
</dbReference>
<dbReference type="Pfam" id="PF02381">
    <property type="entry name" value="MraZ"/>
    <property type="match status" value="2"/>
</dbReference>
<dbReference type="SUPFAM" id="SSF89447">
    <property type="entry name" value="AbrB/MazE/MraZ-like"/>
    <property type="match status" value="1"/>
</dbReference>
<dbReference type="PROSITE" id="PS51740">
    <property type="entry name" value="SPOVT_ABRB"/>
    <property type="match status" value="2"/>
</dbReference>
<feature type="chain" id="PRO_1000148870" description="Transcriptional regulator MraZ">
    <location>
        <begin position="1"/>
        <end position="142"/>
    </location>
</feature>
<feature type="domain" description="SpoVT-AbrB 1" evidence="2">
    <location>
        <begin position="5"/>
        <end position="47"/>
    </location>
</feature>
<feature type="domain" description="SpoVT-AbrB 2" evidence="2">
    <location>
        <begin position="76"/>
        <end position="119"/>
    </location>
</feature>
<evidence type="ECO:0000255" key="1">
    <source>
        <dbReference type="HAMAP-Rule" id="MF_01008"/>
    </source>
</evidence>
<evidence type="ECO:0000255" key="2">
    <source>
        <dbReference type="PROSITE-ProRule" id="PRU01076"/>
    </source>
</evidence>
<sequence>MFLGRFTHAIDDKGRLAIPARFREAFRGQGVLTRGIDRCLTLYPMDSWQPLAEKVSSLSISDPDARAFRRMVFAEATVVEFDRQGRILLPPELRAYAGLEREAIVVGVHSYVEIWSPENWAAQAELLAAEGPSIAQRLATLI</sequence>
<organism>
    <name type="scientific">Thermomicrobium roseum (strain ATCC 27502 / DSM 5159 / P-2)</name>
    <dbReference type="NCBI Taxonomy" id="309801"/>
    <lineage>
        <taxon>Bacteria</taxon>
        <taxon>Pseudomonadati</taxon>
        <taxon>Thermomicrobiota</taxon>
        <taxon>Thermomicrobia</taxon>
        <taxon>Thermomicrobiales</taxon>
        <taxon>Thermomicrobiaceae</taxon>
        <taxon>Thermomicrobium</taxon>
    </lineage>
</organism>
<keyword id="KW-0963">Cytoplasm</keyword>
<keyword id="KW-0238">DNA-binding</keyword>
<keyword id="KW-1185">Reference proteome</keyword>
<keyword id="KW-0677">Repeat</keyword>
<keyword id="KW-0804">Transcription</keyword>
<keyword id="KW-0805">Transcription regulation</keyword>
<proteinExistence type="inferred from homology"/>